<keyword id="KW-0004">4Fe-4S</keyword>
<keyword id="KW-0067">ATP-binding</keyword>
<keyword id="KW-0077">Bacteriochlorophyll biosynthesis</keyword>
<keyword id="KW-0149">Chlorophyll biosynthesis</keyword>
<keyword id="KW-0408">Iron</keyword>
<keyword id="KW-0411">Iron-sulfur</keyword>
<keyword id="KW-0479">Metal-binding</keyword>
<keyword id="KW-0547">Nucleotide-binding</keyword>
<keyword id="KW-0560">Oxidoreductase</keyword>
<keyword id="KW-0602">Photosynthesis</keyword>
<comment type="function">
    <text evidence="1">Component of the dark-operative protochlorophyllide reductase (DPOR) that uses Mg-ATP and reduced ferredoxin to reduce ring D of protochlorophyllide (Pchlide) to form chlorophyllide a (Chlide). This reaction is light-independent. The NB-protein (BchN-BchB) is the catalytic component of the complex.</text>
</comment>
<comment type="catalytic activity">
    <reaction evidence="1">
        <text>chlorophyllide a + oxidized 2[4Fe-4S]-[ferredoxin] + 2 ADP + 2 phosphate = protochlorophyllide a + reduced 2[4Fe-4S]-[ferredoxin] + 2 ATP + 2 H2O</text>
        <dbReference type="Rhea" id="RHEA:28202"/>
        <dbReference type="Rhea" id="RHEA-COMP:10002"/>
        <dbReference type="Rhea" id="RHEA-COMP:10004"/>
        <dbReference type="ChEBI" id="CHEBI:15377"/>
        <dbReference type="ChEBI" id="CHEBI:30616"/>
        <dbReference type="ChEBI" id="CHEBI:33722"/>
        <dbReference type="ChEBI" id="CHEBI:33723"/>
        <dbReference type="ChEBI" id="CHEBI:43474"/>
        <dbReference type="ChEBI" id="CHEBI:83348"/>
        <dbReference type="ChEBI" id="CHEBI:83350"/>
        <dbReference type="ChEBI" id="CHEBI:456216"/>
        <dbReference type="EC" id="1.3.7.7"/>
    </reaction>
</comment>
<comment type="cofactor">
    <cofactor evidence="1">
        <name>[4Fe-4S] cluster</name>
        <dbReference type="ChEBI" id="CHEBI:49883"/>
    </cofactor>
    <text evidence="1">Binds 1 [4Fe-4S] cluster per heterodimer. The cluster is bound at the heterodimer interface by residues from both subunits.</text>
</comment>
<comment type="pathway">
    <text evidence="1">Porphyrin-containing compound metabolism; bacteriochlorophyll biosynthesis (light-independent).</text>
</comment>
<comment type="subunit">
    <text evidence="1">Protochlorophyllide reductase is composed of three subunits; BchL, BchN and BchB. Forms a heterotetramer of two BchB and two BchN subunits.</text>
</comment>
<comment type="similarity">
    <text evidence="1">Belongs to the BchN/ChlN family.</text>
</comment>
<protein>
    <recommendedName>
        <fullName evidence="1">Light-independent protochlorophyllide reductase subunit N</fullName>
        <shortName evidence="1">DPOR subunit N</shortName>
        <shortName evidence="1">LI-POR subunit N</shortName>
        <ecNumber evidence="1">1.3.7.7</ecNumber>
    </recommendedName>
</protein>
<feature type="chain" id="PRO_0000324021" description="Light-independent protochlorophyllide reductase subunit N">
    <location>
        <begin position="1"/>
        <end position="428"/>
    </location>
</feature>
<feature type="binding site" evidence="1">
    <location>
        <position position="31"/>
    </location>
    <ligand>
        <name>[4Fe-4S] cluster</name>
        <dbReference type="ChEBI" id="CHEBI:49883"/>
        <note>ligand shared with heterodimeric partner</note>
    </ligand>
</feature>
<feature type="binding site" evidence="1">
    <location>
        <position position="56"/>
    </location>
    <ligand>
        <name>[4Fe-4S] cluster</name>
        <dbReference type="ChEBI" id="CHEBI:49883"/>
        <note>ligand shared with heterodimeric partner</note>
    </ligand>
</feature>
<feature type="binding site" evidence="1">
    <location>
        <position position="117"/>
    </location>
    <ligand>
        <name>[4Fe-4S] cluster</name>
        <dbReference type="ChEBI" id="CHEBI:49883"/>
        <note>ligand shared with heterodimeric partner</note>
    </ligand>
</feature>
<evidence type="ECO:0000255" key="1">
    <source>
        <dbReference type="HAMAP-Rule" id="MF_00352"/>
    </source>
</evidence>
<name>BCHN_RHOPB</name>
<dbReference type="EC" id="1.3.7.7" evidence="1"/>
<dbReference type="EMBL" id="CP000301">
    <property type="protein sequence ID" value="ABD86875.1"/>
    <property type="molecule type" value="Genomic_DNA"/>
</dbReference>
<dbReference type="SMR" id="Q219R1"/>
<dbReference type="STRING" id="316056.RPC_1313"/>
<dbReference type="KEGG" id="rpc:RPC_1313"/>
<dbReference type="eggNOG" id="COG2710">
    <property type="taxonomic scope" value="Bacteria"/>
</dbReference>
<dbReference type="HOGENOM" id="CLU_037170_0_0_5"/>
<dbReference type="OrthoDB" id="5714774at2"/>
<dbReference type="UniPathway" id="UPA00671"/>
<dbReference type="GO" id="GO:0051539">
    <property type="term" value="F:4 iron, 4 sulfur cluster binding"/>
    <property type="evidence" value="ECO:0007669"/>
    <property type="project" value="UniProtKB-UniRule"/>
</dbReference>
<dbReference type="GO" id="GO:0005524">
    <property type="term" value="F:ATP binding"/>
    <property type="evidence" value="ECO:0007669"/>
    <property type="project" value="UniProtKB-UniRule"/>
</dbReference>
<dbReference type="GO" id="GO:0046872">
    <property type="term" value="F:metal ion binding"/>
    <property type="evidence" value="ECO:0007669"/>
    <property type="project" value="UniProtKB-KW"/>
</dbReference>
<dbReference type="GO" id="GO:0016730">
    <property type="term" value="F:oxidoreductase activity, acting on iron-sulfur proteins as donors"/>
    <property type="evidence" value="ECO:0007669"/>
    <property type="project" value="InterPro"/>
</dbReference>
<dbReference type="GO" id="GO:0016636">
    <property type="term" value="F:oxidoreductase activity, acting on the CH-CH group of donors, iron-sulfur protein as acceptor"/>
    <property type="evidence" value="ECO:0007669"/>
    <property type="project" value="UniProtKB-UniRule"/>
</dbReference>
<dbReference type="GO" id="GO:0036070">
    <property type="term" value="P:light-independent bacteriochlorophyll biosynthetic process"/>
    <property type="evidence" value="ECO:0007669"/>
    <property type="project" value="UniProtKB-UniRule"/>
</dbReference>
<dbReference type="GO" id="GO:0019685">
    <property type="term" value="P:photosynthesis, dark reaction"/>
    <property type="evidence" value="ECO:0007669"/>
    <property type="project" value="InterPro"/>
</dbReference>
<dbReference type="Gene3D" id="3.40.50.1980">
    <property type="entry name" value="Nitrogenase molybdenum iron protein domain"/>
    <property type="match status" value="3"/>
</dbReference>
<dbReference type="HAMAP" id="MF_00352">
    <property type="entry name" value="ChlN_BchN"/>
    <property type="match status" value="1"/>
</dbReference>
<dbReference type="InterPro" id="IPR050293">
    <property type="entry name" value="LIPOR_BchN/ChlN"/>
</dbReference>
<dbReference type="InterPro" id="IPR000510">
    <property type="entry name" value="Nase/OxRdtase_comp1"/>
</dbReference>
<dbReference type="InterPro" id="IPR005970">
    <property type="entry name" value="Protochl_reductN"/>
</dbReference>
<dbReference type="NCBIfam" id="TIGR01279">
    <property type="entry name" value="DPOR_bchN"/>
    <property type="match status" value="1"/>
</dbReference>
<dbReference type="NCBIfam" id="NF002768">
    <property type="entry name" value="PRK02842.1"/>
    <property type="match status" value="1"/>
</dbReference>
<dbReference type="PANTHER" id="PTHR39429">
    <property type="entry name" value="LIGHT-INDEPENDENT PROTOCHLOROPHYLLIDE REDUCTASE SUBUNIT N"/>
    <property type="match status" value="1"/>
</dbReference>
<dbReference type="PANTHER" id="PTHR39429:SF3">
    <property type="entry name" value="LIGHT-INDEPENDENT PROTOCHLOROPHYLLIDE REDUCTASE SUBUNIT N"/>
    <property type="match status" value="1"/>
</dbReference>
<dbReference type="Pfam" id="PF00148">
    <property type="entry name" value="Oxidored_nitro"/>
    <property type="match status" value="1"/>
</dbReference>
<dbReference type="PIRSF" id="PIRSF000162">
    <property type="entry name" value="P_chlorophyll_rd"/>
    <property type="match status" value="1"/>
</dbReference>
<dbReference type="SUPFAM" id="SSF53807">
    <property type="entry name" value="Helical backbone' metal receptor"/>
    <property type="match status" value="1"/>
</dbReference>
<accession>Q219R1</accession>
<sequence length="428" mass="46803">MTVLAQGCDVAPPNNLTKPVRHESGQREVFCGLTGIVWLHRKIQDAFFLVVGSRTCAHLIQSAAGVMIFAEPRFATAIMEEKDLAGLTDANTELDRIVTQLLTRRPDIKLLFLVGSCPSEVIKLDLSRAALRLSQTFSPGVRILSYSGSGIETTFTQGEDACLASLVPELPAASGKDASLLVVGSMADVVEDQFVRMFEALGIGPVQFLPPRNSATLPSVGPNTKFLLAQPFLADTARELENRGATRLRAPFPLGVEGTTAWLRAAANAFAIDPALFDKVTQPARARAERALDNYRKELAGRRIFLFPDSQLEIPLARFLSRELGMQLVEVGTPYLHREHLAEELKLLPPDVQITEGQDVDLQLDRCRLARPDLVVCGLGLANPLEAEGMTTKWAIELVFTPIQGYEQASDLAELFARPLVRRAKLVA</sequence>
<organism>
    <name type="scientific">Rhodopseudomonas palustris (strain BisB18)</name>
    <dbReference type="NCBI Taxonomy" id="316056"/>
    <lineage>
        <taxon>Bacteria</taxon>
        <taxon>Pseudomonadati</taxon>
        <taxon>Pseudomonadota</taxon>
        <taxon>Alphaproteobacteria</taxon>
        <taxon>Hyphomicrobiales</taxon>
        <taxon>Nitrobacteraceae</taxon>
        <taxon>Rhodopseudomonas</taxon>
    </lineage>
</organism>
<gene>
    <name evidence="1" type="primary">bchN</name>
    <name type="ordered locus">RPC_1313</name>
</gene>
<proteinExistence type="inferred from homology"/>
<reference key="1">
    <citation type="submission" date="2006-03" db="EMBL/GenBank/DDBJ databases">
        <title>Complete sequence of Rhodopseudomonas palustris BisB18.</title>
        <authorList>
            <consortium name="US DOE Joint Genome Institute"/>
            <person name="Copeland A."/>
            <person name="Lucas S."/>
            <person name="Lapidus A."/>
            <person name="Barry K."/>
            <person name="Detter J.C."/>
            <person name="Glavina del Rio T."/>
            <person name="Hammon N."/>
            <person name="Israni S."/>
            <person name="Dalin E."/>
            <person name="Tice H."/>
            <person name="Pitluck S."/>
            <person name="Chain P."/>
            <person name="Malfatti S."/>
            <person name="Shin M."/>
            <person name="Vergez L."/>
            <person name="Schmutz J."/>
            <person name="Larimer F."/>
            <person name="Land M."/>
            <person name="Hauser L."/>
            <person name="Pelletier D.A."/>
            <person name="Kyrpides N."/>
            <person name="Anderson I."/>
            <person name="Oda Y."/>
            <person name="Harwood C.S."/>
            <person name="Richardson P."/>
        </authorList>
    </citation>
    <scope>NUCLEOTIDE SEQUENCE [LARGE SCALE GENOMIC DNA]</scope>
    <source>
        <strain>BisB18</strain>
    </source>
</reference>